<proteinExistence type="evidence at protein level"/>
<protein>
    <recommendedName>
        <fullName evidence="1">Anthranilate phosphoribosyltransferase</fullName>
        <ecNumber evidence="1">2.4.2.18</ecNumber>
    </recommendedName>
</protein>
<dbReference type="EC" id="2.4.2.18" evidence="1"/>
<dbReference type="EMBL" id="AB030011">
    <property type="protein sequence ID" value="BAA82546.1"/>
    <property type="molecule type" value="Genomic_DNA"/>
</dbReference>
<dbReference type="EMBL" id="AP006878">
    <property type="protein sequence ID" value="BAD84442.1"/>
    <property type="molecule type" value="Genomic_DNA"/>
</dbReference>
<dbReference type="PIR" id="T43923">
    <property type="entry name" value="T43923"/>
</dbReference>
<dbReference type="RefSeq" id="WP_011249208.1">
    <property type="nucleotide sequence ID" value="NC_006624.1"/>
</dbReference>
<dbReference type="PDB" id="5NOE">
    <property type="method" value="X-ray"/>
    <property type="resolution" value="1.91 A"/>
    <property type="chains" value="A/B/C/D=1-325"/>
</dbReference>
<dbReference type="PDB" id="5NOF">
    <property type="method" value="X-ray"/>
    <property type="resolution" value="2.42 A"/>
    <property type="chains" value="A/B=1-325"/>
</dbReference>
<dbReference type="PDBsum" id="5NOE"/>
<dbReference type="PDBsum" id="5NOF"/>
<dbReference type="SMR" id="Q9YGB4"/>
<dbReference type="FunCoup" id="Q9YGB4">
    <property type="interactions" value="104"/>
</dbReference>
<dbReference type="STRING" id="69014.TK0253"/>
<dbReference type="EnsemblBacteria" id="BAD84442">
    <property type="protein sequence ID" value="BAD84442"/>
    <property type="gene ID" value="TK0253"/>
</dbReference>
<dbReference type="GeneID" id="78446757"/>
<dbReference type="KEGG" id="tko:TK0253"/>
<dbReference type="PATRIC" id="fig|69014.16.peg.252"/>
<dbReference type="eggNOG" id="arCOG02012">
    <property type="taxonomic scope" value="Archaea"/>
</dbReference>
<dbReference type="HOGENOM" id="CLU_034315_2_1_2"/>
<dbReference type="InParanoid" id="Q9YGB4"/>
<dbReference type="OrthoDB" id="8214at2157"/>
<dbReference type="PhylomeDB" id="Q9YGB4"/>
<dbReference type="BRENDA" id="2.4.2.18">
    <property type="organism ID" value="5246"/>
</dbReference>
<dbReference type="UniPathway" id="UPA00035">
    <property type="reaction ID" value="UER00041"/>
</dbReference>
<dbReference type="Proteomes" id="UP000000536">
    <property type="component" value="Chromosome"/>
</dbReference>
<dbReference type="GO" id="GO:0005829">
    <property type="term" value="C:cytosol"/>
    <property type="evidence" value="ECO:0000318"/>
    <property type="project" value="GO_Central"/>
</dbReference>
<dbReference type="GO" id="GO:0004048">
    <property type="term" value="F:anthranilate phosphoribosyltransferase activity"/>
    <property type="evidence" value="ECO:0007669"/>
    <property type="project" value="UniProtKB-UniRule"/>
</dbReference>
<dbReference type="GO" id="GO:0000287">
    <property type="term" value="F:magnesium ion binding"/>
    <property type="evidence" value="ECO:0007669"/>
    <property type="project" value="UniProtKB-UniRule"/>
</dbReference>
<dbReference type="GO" id="GO:0000162">
    <property type="term" value="P:L-tryptophan biosynthetic process"/>
    <property type="evidence" value="ECO:0000318"/>
    <property type="project" value="GO_Central"/>
</dbReference>
<dbReference type="FunFam" id="3.40.1030.10:FF:000010">
    <property type="entry name" value="Anthranilate phosphoribosyltransferase"/>
    <property type="match status" value="1"/>
</dbReference>
<dbReference type="Gene3D" id="3.40.1030.10">
    <property type="entry name" value="Nucleoside phosphorylase/phosphoribosyltransferase catalytic domain"/>
    <property type="match status" value="1"/>
</dbReference>
<dbReference type="Gene3D" id="1.20.970.10">
    <property type="entry name" value="Transferase, Pyrimidine Nucleoside Phosphorylase, Chain C"/>
    <property type="match status" value="1"/>
</dbReference>
<dbReference type="HAMAP" id="MF_00211">
    <property type="entry name" value="TrpD"/>
    <property type="match status" value="1"/>
</dbReference>
<dbReference type="InterPro" id="IPR005940">
    <property type="entry name" value="Anthranilate_Pribosyl_Tfrase"/>
</dbReference>
<dbReference type="InterPro" id="IPR000312">
    <property type="entry name" value="Glycosyl_Trfase_fam3"/>
</dbReference>
<dbReference type="InterPro" id="IPR017459">
    <property type="entry name" value="Glycosyl_Trfase_fam3_N_dom"/>
</dbReference>
<dbReference type="InterPro" id="IPR036320">
    <property type="entry name" value="Glycosyl_Trfase_fam3_N_dom_sf"/>
</dbReference>
<dbReference type="InterPro" id="IPR035902">
    <property type="entry name" value="Nuc_phospho_transferase"/>
</dbReference>
<dbReference type="NCBIfam" id="TIGR01245">
    <property type="entry name" value="trpD"/>
    <property type="match status" value="1"/>
</dbReference>
<dbReference type="PANTHER" id="PTHR43285">
    <property type="entry name" value="ANTHRANILATE PHOSPHORIBOSYLTRANSFERASE"/>
    <property type="match status" value="1"/>
</dbReference>
<dbReference type="PANTHER" id="PTHR43285:SF2">
    <property type="entry name" value="ANTHRANILATE PHOSPHORIBOSYLTRANSFERASE"/>
    <property type="match status" value="1"/>
</dbReference>
<dbReference type="Pfam" id="PF02885">
    <property type="entry name" value="Glycos_trans_3N"/>
    <property type="match status" value="1"/>
</dbReference>
<dbReference type="Pfam" id="PF00591">
    <property type="entry name" value="Glycos_transf_3"/>
    <property type="match status" value="1"/>
</dbReference>
<dbReference type="SUPFAM" id="SSF52418">
    <property type="entry name" value="Nucleoside phosphorylase/phosphoribosyltransferase catalytic domain"/>
    <property type="match status" value="1"/>
</dbReference>
<dbReference type="SUPFAM" id="SSF47648">
    <property type="entry name" value="Nucleoside phosphorylase/phosphoribosyltransferase N-terminal domain"/>
    <property type="match status" value="1"/>
</dbReference>
<keyword id="KW-0002">3D-structure</keyword>
<keyword id="KW-0028">Amino-acid biosynthesis</keyword>
<keyword id="KW-0057">Aromatic amino acid biosynthesis</keyword>
<keyword id="KW-0328">Glycosyltransferase</keyword>
<keyword id="KW-0460">Magnesium</keyword>
<keyword id="KW-0479">Metal-binding</keyword>
<keyword id="KW-1185">Reference proteome</keyword>
<keyword id="KW-0808">Transferase</keyword>
<keyword id="KW-0822">Tryptophan biosynthesis</keyword>
<feature type="chain" id="PRO_0000154521" description="Anthranilate phosphoribosyltransferase">
    <location>
        <begin position="1"/>
        <end position="325"/>
    </location>
</feature>
<feature type="binding site" evidence="1">
    <location>
        <position position="74"/>
    </location>
    <ligand>
        <name>5-phospho-alpha-D-ribose 1-diphosphate</name>
        <dbReference type="ChEBI" id="CHEBI:58017"/>
    </ligand>
</feature>
<feature type="binding site" evidence="1">
    <location>
        <position position="74"/>
    </location>
    <ligand>
        <name>anthranilate</name>
        <dbReference type="ChEBI" id="CHEBI:16567"/>
        <label>1</label>
    </ligand>
</feature>
<feature type="binding site" evidence="1">
    <location>
        <begin position="77"/>
        <end position="78"/>
    </location>
    <ligand>
        <name>5-phospho-alpha-D-ribose 1-diphosphate</name>
        <dbReference type="ChEBI" id="CHEBI:58017"/>
    </ligand>
</feature>
<feature type="binding site" evidence="1">
    <location>
        <position position="82"/>
    </location>
    <ligand>
        <name>5-phospho-alpha-D-ribose 1-diphosphate</name>
        <dbReference type="ChEBI" id="CHEBI:58017"/>
    </ligand>
</feature>
<feature type="binding site" evidence="1">
    <location>
        <begin position="84"/>
        <end position="87"/>
    </location>
    <ligand>
        <name>5-phospho-alpha-D-ribose 1-diphosphate</name>
        <dbReference type="ChEBI" id="CHEBI:58017"/>
    </ligand>
</feature>
<feature type="binding site" evidence="1">
    <location>
        <position position="86"/>
    </location>
    <ligand>
        <name>Mg(2+)</name>
        <dbReference type="ChEBI" id="CHEBI:18420"/>
        <label>1</label>
    </ligand>
</feature>
<feature type="binding site" evidence="1">
    <location>
        <begin position="101"/>
        <end position="109"/>
    </location>
    <ligand>
        <name>5-phospho-alpha-D-ribose 1-diphosphate</name>
        <dbReference type="ChEBI" id="CHEBI:58017"/>
    </ligand>
</feature>
<feature type="binding site" evidence="1">
    <location>
        <position position="104"/>
    </location>
    <ligand>
        <name>anthranilate</name>
        <dbReference type="ChEBI" id="CHEBI:16567"/>
        <label>1</label>
    </ligand>
</feature>
<feature type="binding site" evidence="1">
    <location>
        <position position="113"/>
    </location>
    <ligand>
        <name>5-phospho-alpha-D-ribose 1-diphosphate</name>
        <dbReference type="ChEBI" id="CHEBI:58017"/>
    </ligand>
</feature>
<feature type="binding site" evidence="1">
    <location>
        <position position="159"/>
    </location>
    <ligand>
        <name>anthranilate</name>
        <dbReference type="ChEBI" id="CHEBI:16567"/>
        <label>2</label>
    </ligand>
</feature>
<feature type="binding site" evidence="1">
    <location>
        <position position="217"/>
    </location>
    <ligand>
        <name>Mg(2+)</name>
        <dbReference type="ChEBI" id="CHEBI:18420"/>
        <label>2</label>
    </ligand>
</feature>
<feature type="binding site" evidence="1">
    <location>
        <position position="218"/>
    </location>
    <ligand>
        <name>Mg(2+)</name>
        <dbReference type="ChEBI" id="CHEBI:18420"/>
        <label>1</label>
    </ligand>
</feature>
<feature type="binding site" evidence="1">
    <location>
        <position position="218"/>
    </location>
    <ligand>
        <name>Mg(2+)</name>
        <dbReference type="ChEBI" id="CHEBI:18420"/>
        <label>2</label>
    </ligand>
</feature>
<feature type="helix" evidence="2">
    <location>
        <begin position="2"/>
        <end position="8"/>
    </location>
</feature>
<feature type="helix" evidence="2">
    <location>
        <begin position="15"/>
        <end position="26"/>
    </location>
</feature>
<feature type="helix" evidence="2">
    <location>
        <begin position="30"/>
        <end position="43"/>
    </location>
</feature>
<feature type="helix" evidence="2">
    <location>
        <begin position="47"/>
        <end position="60"/>
    </location>
</feature>
<feature type="strand" evidence="2">
    <location>
        <begin position="70"/>
        <end position="74"/>
    </location>
</feature>
<feature type="helix" evidence="2">
    <location>
        <begin position="85"/>
        <end position="93"/>
    </location>
</feature>
<feature type="turn" evidence="2">
    <location>
        <begin position="94"/>
        <end position="96"/>
    </location>
</feature>
<feature type="strand" evidence="2">
    <location>
        <begin position="99"/>
        <end position="102"/>
    </location>
</feature>
<feature type="helix" evidence="2">
    <location>
        <begin position="113"/>
        <end position="119"/>
    </location>
</feature>
<feature type="helix" evidence="2">
    <location>
        <begin position="128"/>
        <end position="138"/>
    </location>
</feature>
<feature type="strand" evidence="2">
    <location>
        <begin position="139"/>
        <end position="143"/>
    </location>
</feature>
<feature type="helix" evidence="2">
    <location>
        <begin position="145"/>
        <end position="148"/>
    </location>
</feature>
<feature type="helix" evidence="2">
    <location>
        <begin position="150"/>
        <end position="152"/>
    </location>
</feature>
<feature type="helix" evidence="2">
    <location>
        <begin position="155"/>
        <end position="162"/>
    </location>
</feature>
<feature type="helix" evidence="2">
    <location>
        <begin position="168"/>
        <end position="171"/>
    </location>
</feature>
<feature type="helix" evidence="2">
    <location>
        <begin position="172"/>
        <end position="174"/>
    </location>
</feature>
<feature type="strand" evidence="2">
    <location>
        <begin position="181"/>
        <end position="186"/>
    </location>
</feature>
<feature type="helix" evidence="2">
    <location>
        <begin position="190"/>
        <end position="192"/>
    </location>
</feature>
<feature type="helix" evidence="2">
    <location>
        <begin position="193"/>
        <end position="203"/>
    </location>
</feature>
<feature type="strand" evidence="2">
    <location>
        <begin position="206"/>
        <end position="213"/>
    </location>
</feature>
<feature type="strand" evidence="2">
    <location>
        <begin position="216"/>
        <end position="218"/>
    </location>
</feature>
<feature type="strand" evidence="2">
    <location>
        <begin position="221"/>
        <end position="223"/>
    </location>
</feature>
<feature type="strand" evidence="2">
    <location>
        <begin position="225"/>
        <end position="239"/>
    </location>
</feature>
<feature type="helix" evidence="2">
    <location>
        <begin position="241"/>
        <end position="244"/>
    </location>
</feature>
<feature type="helix" evidence="2">
    <location>
        <begin position="257"/>
        <end position="268"/>
    </location>
</feature>
<feature type="helix" evidence="2">
    <location>
        <begin position="274"/>
        <end position="290"/>
    </location>
</feature>
<feature type="strand" evidence="3">
    <location>
        <begin position="293"/>
        <end position="296"/>
    </location>
</feature>
<feature type="helix" evidence="2">
    <location>
        <begin position="297"/>
        <end position="306"/>
    </location>
</feature>
<feature type="helix" evidence="2">
    <location>
        <begin position="310"/>
        <end position="324"/>
    </location>
</feature>
<gene>
    <name evidence="1" type="primary">trpD</name>
    <name type="ordered locus">TK0253</name>
</gene>
<comment type="function">
    <text evidence="1">Catalyzes the transfer of the phosphoribosyl group of 5-phosphorylribose-1-pyrophosphate (PRPP) to anthranilate to yield N-(5'-phosphoribosyl)-anthranilate (PRA).</text>
</comment>
<comment type="catalytic activity">
    <reaction evidence="1">
        <text>N-(5-phospho-beta-D-ribosyl)anthranilate + diphosphate = 5-phospho-alpha-D-ribose 1-diphosphate + anthranilate</text>
        <dbReference type="Rhea" id="RHEA:11768"/>
        <dbReference type="ChEBI" id="CHEBI:16567"/>
        <dbReference type="ChEBI" id="CHEBI:18277"/>
        <dbReference type="ChEBI" id="CHEBI:33019"/>
        <dbReference type="ChEBI" id="CHEBI:58017"/>
        <dbReference type="EC" id="2.4.2.18"/>
    </reaction>
</comment>
<comment type="cofactor">
    <cofactor evidence="1">
        <name>Mg(2+)</name>
        <dbReference type="ChEBI" id="CHEBI:18420"/>
    </cofactor>
    <text evidence="1">Binds 2 magnesium ions per monomer.</text>
</comment>
<comment type="pathway">
    <text evidence="1">Amino-acid biosynthesis; L-tryptophan biosynthesis; L-tryptophan from chorismate: step 2/5.</text>
</comment>
<comment type="subunit">
    <text evidence="1">Homodimer.</text>
</comment>
<comment type="similarity">
    <text evidence="1">Belongs to the anthranilate phosphoribosyltransferase family.</text>
</comment>
<evidence type="ECO:0000255" key="1">
    <source>
        <dbReference type="HAMAP-Rule" id="MF_00211"/>
    </source>
</evidence>
<evidence type="ECO:0007829" key="2">
    <source>
        <dbReference type="PDB" id="5NOE"/>
    </source>
</evidence>
<evidence type="ECO:0007829" key="3">
    <source>
        <dbReference type="PDB" id="5NOF"/>
    </source>
</evidence>
<accession>Q9YGB4</accession>
<sequence>MSLLAKIVDGKNLSFEEAYELFNELKGSDGVLIGAYLAALQTKGYTGEELAGLARAMRDSAVKLDLGKVADTAGTGGDGSSTINVSTASALILSAFTRVAKHGNVSITSKSGSANVLEALGLNIRVSPERAREMVESTNFTFIFAPAYHPALRPIMPVRKALGIKTVFNVIGPLANPADPAYQVVGVNSPELLEPVAEALEFLGVERALVVHGSGMDEVSPHRETLVLEVGNGVERYTLSPEDFGIEPVKPLPCSSPEESAARIKAVLGGSGRREDRDFILVNASAALYASGVAEDFREGLEMAREALGQGMLEKLEEIACLSKS</sequence>
<reference key="1">
    <citation type="journal article" date="1999" name="Mol. Gen. Genet.">
        <title>The tryptophan biosynthesis gene cluster trpCDEGFBA from Pyrococcus kodakaraensis KOD1 is regulated at the transcriptional level and expressed as a single mRNA.</title>
        <authorList>
            <person name="Tang X."/>
            <person name="Ezaki S."/>
            <person name="Fujiwara S."/>
            <person name="Takagi M."/>
            <person name="Atomi H."/>
            <person name="Imanaka T."/>
        </authorList>
    </citation>
    <scope>NUCLEOTIDE SEQUENCE [GENOMIC DNA]</scope>
    <source>
        <strain>ATCC BAA-918 / JCM 12380 / KOD1</strain>
    </source>
</reference>
<reference key="2">
    <citation type="journal article" date="2005" name="Genome Res.">
        <title>Complete genome sequence of the hyperthermophilic archaeon Thermococcus kodakaraensis KOD1 and comparison with Pyrococcus genomes.</title>
        <authorList>
            <person name="Fukui T."/>
            <person name="Atomi H."/>
            <person name="Kanai T."/>
            <person name="Matsumi R."/>
            <person name="Fujiwara S."/>
            <person name="Imanaka T."/>
        </authorList>
    </citation>
    <scope>NUCLEOTIDE SEQUENCE [LARGE SCALE GENOMIC DNA]</scope>
    <source>
        <strain>ATCC BAA-918 / JCM 12380 / KOD1</strain>
    </source>
</reference>
<name>TRPD_THEKO</name>
<organism>
    <name type="scientific">Thermococcus kodakarensis (strain ATCC BAA-918 / JCM 12380 / KOD1)</name>
    <name type="common">Pyrococcus kodakaraensis (strain KOD1)</name>
    <dbReference type="NCBI Taxonomy" id="69014"/>
    <lineage>
        <taxon>Archaea</taxon>
        <taxon>Methanobacteriati</taxon>
        <taxon>Methanobacteriota</taxon>
        <taxon>Thermococci</taxon>
        <taxon>Thermococcales</taxon>
        <taxon>Thermococcaceae</taxon>
        <taxon>Thermococcus</taxon>
    </lineage>
</organism>